<proteinExistence type="inferred from homology"/>
<feature type="chain" id="PRO_0000185249" description="Acetylornithine deacetylase">
    <location>
        <begin position="1"/>
        <end position="383"/>
    </location>
</feature>
<feature type="active site" evidence="1">
    <location>
        <position position="82"/>
    </location>
</feature>
<feature type="active site" evidence="1">
    <location>
        <position position="144"/>
    </location>
</feature>
<feature type="binding site" evidence="1">
    <location>
        <position position="80"/>
    </location>
    <ligand>
        <name>Zn(2+)</name>
        <dbReference type="ChEBI" id="CHEBI:29105"/>
        <label>1</label>
    </ligand>
</feature>
<feature type="binding site" evidence="1">
    <location>
        <position position="112"/>
    </location>
    <ligand>
        <name>Zn(2+)</name>
        <dbReference type="ChEBI" id="CHEBI:29105"/>
        <label>1</label>
    </ligand>
</feature>
<feature type="binding site" evidence="1">
    <location>
        <position position="112"/>
    </location>
    <ligand>
        <name>Zn(2+)</name>
        <dbReference type="ChEBI" id="CHEBI:29105"/>
        <label>2</label>
    </ligand>
</feature>
<feature type="binding site" evidence="1">
    <location>
        <position position="145"/>
    </location>
    <ligand>
        <name>Zn(2+)</name>
        <dbReference type="ChEBI" id="CHEBI:29105"/>
        <label>2</label>
    </ligand>
</feature>
<feature type="binding site" evidence="1">
    <location>
        <position position="169"/>
    </location>
    <ligand>
        <name>Zn(2+)</name>
        <dbReference type="ChEBI" id="CHEBI:29105"/>
        <label>1</label>
    </ligand>
</feature>
<feature type="binding site" evidence="1">
    <location>
        <position position="355"/>
    </location>
    <ligand>
        <name>Zn(2+)</name>
        <dbReference type="ChEBI" id="CHEBI:29105"/>
        <label>2</label>
    </ligand>
</feature>
<sequence length="383" mass="42201">MKNVLPPFIEIYRALIATPSISATEESLDQSNASLITLLAGWFSDLGFNVEVQPVPGTRNKFNMLASTGHGAGGLLLTGHTDTVPFDDGRWTRDPFTLTEHDNKLYGLGTADMKGFFAFILDALRDVDVTKLKKPLYILATADEETSMAGARYFSKTTALRPDCAIIGEPTSLQPIRAHKGHISNVVRVLGQSGHSSDPARGVNAIELMHDAIGHIMQLRDSLKARYHYEAFTVPYPTLNLGHIHGGDASNRICACCELHMDIRPLPGMTLNDLNGLLNDALAPVSERWPGRLTVAELHPPIPGYECPPDHQLVEVVEKLLGTKTDVVNYCTEAPFMQTLCPTLVLGPGSINQAHQPDEYLETRFIKPTRELITQVVHHFCWH</sequence>
<gene>
    <name evidence="1" type="primary">argE</name>
    <name type="ordered locus">STM4120</name>
</gene>
<comment type="function">
    <text evidence="1">Catalyzes the hydrolysis of the amide bond of N(2)-acetylated L-amino acids. Cleaves the acetyl group from N-acetyl-L-ornithine to form L-ornithine, an intermediate in L-arginine biosynthesis pathway, and a branchpoint in the synthesis of polyamines.</text>
</comment>
<comment type="catalytic activity">
    <reaction evidence="1">
        <text>N(2)-acetyl-L-ornithine + H2O = L-ornithine + acetate</text>
        <dbReference type="Rhea" id="RHEA:15941"/>
        <dbReference type="ChEBI" id="CHEBI:15377"/>
        <dbReference type="ChEBI" id="CHEBI:30089"/>
        <dbReference type="ChEBI" id="CHEBI:46911"/>
        <dbReference type="ChEBI" id="CHEBI:57805"/>
        <dbReference type="EC" id="3.5.1.16"/>
    </reaction>
</comment>
<comment type="cofactor">
    <cofactor evidence="1">
        <name>Zn(2+)</name>
        <dbReference type="ChEBI" id="CHEBI:29105"/>
    </cofactor>
    <cofactor evidence="1">
        <name>Co(2+)</name>
        <dbReference type="ChEBI" id="CHEBI:48828"/>
    </cofactor>
    <text evidence="1">Binds 2 Zn(2+) or Co(2+) ions per subunit.</text>
</comment>
<comment type="cofactor">
    <cofactor evidence="1">
        <name>glutathione</name>
        <dbReference type="ChEBI" id="CHEBI:57925"/>
    </cofactor>
</comment>
<comment type="pathway">
    <text evidence="1">Amino-acid biosynthesis; L-arginine biosynthesis; L-ornithine from N(2)-acetyl-L-ornithine (linear): step 1/1.</text>
</comment>
<comment type="subunit">
    <text evidence="1">Homodimer.</text>
</comment>
<comment type="subcellular location">
    <subcellularLocation>
        <location evidence="1">Cytoplasm</location>
    </subcellularLocation>
</comment>
<comment type="similarity">
    <text evidence="1 2">Belongs to the peptidase M20A family. ArgE subfamily.</text>
</comment>
<evidence type="ECO:0000255" key="1">
    <source>
        <dbReference type="HAMAP-Rule" id="MF_01108"/>
    </source>
</evidence>
<evidence type="ECO:0000305" key="2"/>
<accession>Q8ZKL9</accession>
<protein>
    <recommendedName>
        <fullName evidence="1">Acetylornithine deacetylase</fullName>
        <shortName evidence="1">AO</shortName>
        <shortName evidence="1">Acetylornithinase</shortName>
        <ecNumber evidence="1">3.5.1.16</ecNumber>
    </recommendedName>
    <alternativeName>
        <fullName evidence="1">N-acetylornithinase</fullName>
        <shortName evidence="1">NAO</shortName>
    </alternativeName>
</protein>
<organism>
    <name type="scientific">Salmonella typhimurium (strain LT2 / SGSC1412 / ATCC 700720)</name>
    <dbReference type="NCBI Taxonomy" id="99287"/>
    <lineage>
        <taxon>Bacteria</taxon>
        <taxon>Pseudomonadati</taxon>
        <taxon>Pseudomonadota</taxon>
        <taxon>Gammaproteobacteria</taxon>
        <taxon>Enterobacterales</taxon>
        <taxon>Enterobacteriaceae</taxon>
        <taxon>Salmonella</taxon>
    </lineage>
</organism>
<name>ARGE_SALTY</name>
<dbReference type="EC" id="3.5.1.16" evidence="1"/>
<dbReference type="EMBL" id="AE006468">
    <property type="protein sequence ID" value="AAL22959.1"/>
    <property type="molecule type" value="Genomic_DNA"/>
</dbReference>
<dbReference type="RefSeq" id="NP_463000.1">
    <property type="nucleotide sequence ID" value="NC_003197.2"/>
</dbReference>
<dbReference type="RefSeq" id="WP_000800210.1">
    <property type="nucleotide sequence ID" value="NC_003197.2"/>
</dbReference>
<dbReference type="SMR" id="Q8ZKL9"/>
<dbReference type="STRING" id="99287.STM4120"/>
<dbReference type="MEROPS" id="M20.974"/>
<dbReference type="PaxDb" id="99287-STM4120"/>
<dbReference type="GeneID" id="1255647"/>
<dbReference type="KEGG" id="stm:STM4120"/>
<dbReference type="PATRIC" id="fig|99287.12.peg.4342"/>
<dbReference type="HOGENOM" id="CLU_021802_2_4_6"/>
<dbReference type="OMA" id="RLHKGVM"/>
<dbReference type="PhylomeDB" id="Q8ZKL9"/>
<dbReference type="BioCyc" id="SENT99287:STM4120-MONOMER"/>
<dbReference type="UniPathway" id="UPA00068">
    <property type="reaction ID" value="UER00110"/>
</dbReference>
<dbReference type="Proteomes" id="UP000001014">
    <property type="component" value="Chromosome"/>
</dbReference>
<dbReference type="GO" id="GO:0005737">
    <property type="term" value="C:cytoplasm"/>
    <property type="evidence" value="ECO:0007669"/>
    <property type="project" value="UniProtKB-SubCell"/>
</dbReference>
<dbReference type="GO" id="GO:0008777">
    <property type="term" value="F:acetylornithine deacetylase activity"/>
    <property type="evidence" value="ECO:0000318"/>
    <property type="project" value="GO_Central"/>
</dbReference>
<dbReference type="GO" id="GO:0008270">
    <property type="term" value="F:zinc ion binding"/>
    <property type="evidence" value="ECO:0007669"/>
    <property type="project" value="UniProtKB-UniRule"/>
</dbReference>
<dbReference type="GO" id="GO:0006526">
    <property type="term" value="P:L-arginine biosynthetic process"/>
    <property type="evidence" value="ECO:0000318"/>
    <property type="project" value="GO_Central"/>
</dbReference>
<dbReference type="CDD" id="cd03894">
    <property type="entry name" value="M20_ArgE"/>
    <property type="match status" value="1"/>
</dbReference>
<dbReference type="FunFam" id="3.30.70.360:FF:000003">
    <property type="entry name" value="Acetylornithine deacetylase"/>
    <property type="match status" value="1"/>
</dbReference>
<dbReference type="Gene3D" id="3.30.70.360">
    <property type="match status" value="1"/>
</dbReference>
<dbReference type="Gene3D" id="3.40.630.10">
    <property type="entry name" value="Zn peptidases"/>
    <property type="match status" value="1"/>
</dbReference>
<dbReference type="HAMAP" id="MF_01108">
    <property type="entry name" value="ArgE"/>
    <property type="match status" value="1"/>
</dbReference>
<dbReference type="InterPro" id="IPR010169">
    <property type="entry name" value="AcOrn-deacetyl"/>
</dbReference>
<dbReference type="InterPro" id="IPR001261">
    <property type="entry name" value="ArgE/DapE_CS"/>
</dbReference>
<dbReference type="InterPro" id="IPR036264">
    <property type="entry name" value="Bact_exopeptidase_dim_dom"/>
</dbReference>
<dbReference type="InterPro" id="IPR002933">
    <property type="entry name" value="Peptidase_M20"/>
</dbReference>
<dbReference type="InterPro" id="IPR011650">
    <property type="entry name" value="Peptidase_M20_dimer"/>
</dbReference>
<dbReference type="InterPro" id="IPR050072">
    <property type="entry name" value="Peptidase_M20A"/>
</dbReference>
<dbReference type="NCBIfam" id="TIGR01892">
    <property type="entry name" value="AcOrn-deacetyl"/>
    <property type="match status" value="1"/>
</dbReference>
<dbReference type="NCBIfam" id="NF003474">
    <property type="entry name" value="PRK05111.1"/>
    <property type="match status" value="1"/>
</dbReference>
<dbReference type="PANTHER" id="PTHR43808">
    <property type="entry name" value="ACETYLORNITHINE DEACETYLASE"/>
    <property type="match status" value="1"/>
</dbReference>
<dbReference type="PANTHER" id="PTHR43808:SF1">
    <property type="entry name" value="ACETYLORNITHINE DEACETYLASE"/>
    <property type="match status" value="1"/>
</dbReference>
<dbReference type="Pfam" id="PF07687">
    <property type="entry name" value="M20_dimer"/>
    <property type="match status" value="1"/>
</dbReference>
<dbReference type="Pfam" id="PF01546">
    <property type="entry name" value="Peptidase_M20"/>
    <property type="match status" value="1"/>
</dbReference>
<dbReference type="SUPFAM" id="SSF55031">
    <property type="entry name" value="Bacterial exopeptidase dimerisation domain"/>
    <property type="match status" value="1"/>
</dbReference>
<dbReference type="SUPFAM" id="SSF53187">
    <property type="entry name" value="Zn-dependent exopeptidases"/>
    <property type="match status" value="1"/>
</dbReference>
<dbReference type="PROSITE" id="PS00758">
    <property type="entry name" value="ARGE_DAPE_CPG2_1"/>
    <property type="match status" value="1"/>
</dbReference>
<dbReference type="PROSITE" id="PS00759">
    <property type="entry name" value="ARGE_DAPE_CPG2_2"/>
    <property type="match status" value="1"/>
</dbReference>
<keyword id="KW-0028">Amino-acid biosynthesis</keyword>
<keyword id="KW-0055">Arginine biosynthesis</keyword>
<keyword id="KW-0170">Cobalt</keyword>
<keyword id="KW-0963">Cytoplasm</keyword>
<keyword id="KW-0378">Hydrolase</keyword>
<keyword id="KW-0479">Metal-binding</keyword>
<keyword id="KW-1185">Reference proteome</keyword>
<keyword id="KW-0862">Zinc</keyword>
<reference key="1">
    <citation type="journal article" date="2001" name="Nature">
        <title>Complete genome sequence of Salmonella enterica serovar Typhimurium LT2.</title>
        <authorList>
            <person name="McClelland M."/>
            <person name="Sanderson K.E."/>
            <person name="Spieth J."/>
            <person name="Clifton S.W."/>
            <person name="Latreille P."/>
            <person name="Courtney L."/>
            <person name="Porwollik S."/>
            <person name="Ali J."/>
            <person name="Dante M."/>
            <person name="Du F."/>
            <person name="Hou S."/>
            <person name="Layman D."/>
            <person name="Leonard S."/>
            <person name="Nguyen C."/>
            <person name="Scott K."/>
            <person name="Holmes A."/>
            <person name="Grewal N."/>
            <person name="Mulvaney E."/>
            <person name="Ryan E."/>
            <person name="Sun H."/>
            <person name="Florea L."/>
            <person name="Miller W."/>
            <person name="Stoneking T."/>
            <person name="Nhan M."/>
            <person name="Waterston R."/>
            <person name="Wilson R.K."/>
        </authorList>
    </citation>
    <scope>NUCLEOTIDE SEQUENCE [LARGE SCALE GENOMIC DNA]</scope>
    <source>
        <strain>LT2 / SGSC1412 / ATCC 700720</strain>
    </source>
</reference>